<organism>
    <name type="scientific">Sulfurisphaera tokodaii (strain DSM 16993 / JCM 10545 / NBRC 100140 / 7)</name>
    <name type="common">Sulfolobus tokodaii</name>
    <dbReference type="NCBI Taxonomy" id="273063"/>
    <lineage>
        <taxon>Archaea</taxon>
        <taxon>Thermoproteota</taxon>
        <taxon>Thermoprotei</taxon>
        <taxon>Sulfolobales</taxon>
        <taxon>Sulfolobaceae</taxon>
        <taxon>Sulfurisphaera</taxon>
    </lineage>
</organism>
<accession>Q96YV2</accession>
<gene>
    <name evidence="1" type="primary">dnaG</name>
    <name type="ordered locus">STK_20750</name>
</gene>
<reference key="1">
    <citation type="journal article" date="2001" name="DNA Res.">
        <title>Complete genome sequence of an aerobic thermoacidophilic Crenarchaeon, Sulfolobus tokodaii strain7.</title>
        <authorList>
            <person name="Kawarabayasi Y."/>
            <person name="Hino Y."/>
            <person name="Horikawa H."/>
            <person name="Jin-no K."/>
            <person name="Takahashi M."/>
            <person name="Sekine M."/>
            <person name="Baba S."/>
            <person name="Ankai A."/>
            <person name="Kosugi H."/>
            <person name="Hosoyama A."/>
            <person name="Fukui S."/>
            <person name="Nagai Y."/>
            <person name="Nishijima K."/>
            <person name="Otsuka R."/>
            <person name="Nakazawa H."/>
            <person name="Takamiya M."/>
            <person name="Kato Y."/>
            <person name="Yoshizawa T."/>
            <person name="Tanaka T."/>
            <person name="Kudoh Y."/>
            <person name="Yamazaki J."/>
            <person name="Kushida N."/>
            <person name="Oguchi A."/>
            <person name="Aoki K."/>
            <person name="Masuda S."/>
            <person name="Yanagii M."/>
            <person name="Nishimura M."/>
            <person name="Yamagishi A."/>
            <person name="Oshima T."/>
            <person name="Kikuchi H."/>
        </authorList>
    </citation>
    <scope>NUCLEOTIDE SEQUENCE [LARGE SCALE GENOMIC DNA]</scope>
    <source>
        <strain>DSM 16993 / JCM 10545 / NBRC 100140 / 7</strain>
    </source>
</reference>
<protein>
    <recommendedName>
        <fullName evidence="1">DNA primase DnaG</fullName>
        <ecNumber evidence="1">2.7.7.101</ecNumber>
    </recommendedName>
</protein>
<proteinExistence type="inferred from homology"/>
<keyword id="KW-0235">DNA replication</keyword>
<keyword id="KW-0240">DNA-directed RNA polymerase</keyword>
<keyword id="KW-0271">Exosome</keyword>
<keyword id="KW-0460">Magnesium</keyword>
<keyword id="KW-0479">Metal-binding</keyword>
<keyword id="KW-0548">Nucleotidyltransferase</keyword>
<keyword id="KW-0639">Primosome</keyword>
<keyword id="KW-1185">Reference proteome</keyword>
<keyword id="KW-0804">Transcription</keyword>
<keyword id="KW-0808">Transferase</keyword>
<evidence type="ECO:0000255" key="1">
    <source>
        <dbReference type="HAMAP-Rule" id="MF_00007"/>
    </source>
</evidence>
<sequence>MKYNIVLKFEVEGIVDKPDVIGAIFGQTENLFGEEFDLRELQDKGRLGRIYVNINTSKNKTEGEIIIPSNLDRIETALIAAMVENVDKVGPYNARFKLVEIQDIREEKIKKIIDRAKEILGTWTKEKTLDIKEVIYEISSAVKTGEIIEYGPDRLPAGPDVDKDPELIIVEGRADVINLLRYGYKNVIAIEGATGKIPQTIIDLAKQKKTVIAFLDGDHGGDLILKELLANNVKIDYVARAPTGKEVEELTGKEINKSLANMMTVAQYMKKQQEAQQALKEALAPESQPPIVVSKPTTPEQIKEITIKIPQHIIEEIKKLPGTLEGIMFDENWNPIERIQVRDIVQRLENLTDNQNISYIIFDGVITQRLLDLASAKNIKLLVGARIGGISKRPKNVEILTMTDLFTS</sequence>
<name>DNAG_SULTO</name>
<comment type="function">
    <text evidence="1">RNA polymerase that catalyzes the synthesis of short RNA molecules used as primers for DNA polymerase during DNA replication. Also part of the exosome, which is a complex involved in RNA degradation. Acts as a poly(A)-binding protein that enhances the interaction between heteromeric, adenine-rich transcripts and the exosome.</text>
</comment>
<comment type="catalytic activity">
    <reaction evidence="1">
        <text>ssDNA + n NTP = ssDNA/pppN(pN)n-1 hybrid + (n-1) diphosphate.</text>
        <dbReference type="EC" id="2.7.7.101"/>
    </reaction>
</comment>
<comment type="cofactor">
    <cofactor evidence="1">
        <name>Mg(2+)</name>
        <dbReference type="ChEBI" id="CHEBI:18420"/>
    </cofactor>
    <text evidence="1">Binds two Mg(2+) per subunit.</text>
</comment>
<comment type="subunit">
    <text evidence="1">Forms a ternary complex with MCM helicase and DNA. Component of the archaeal exosome complex.</text>
</comment>
<comment type="similarity">
    <text evidence="1">Belongs to the archaeal DnaG primase family.</text>
</comment>
<feature type="chain" id="PRO_0000240467" description="DNA primase DnaG">
    <location>
        <begin position="1"/>
        <end position="408"/>
    </location>
</feature>
<feature type="domain" description="Toprim" evidence="1">
    <location>
        <begin position="165"/>
        <end position="243"/>
    </location>
</feature>
<feature type="binding site" evidence="1">
    <location>
        <position position="171"/>
    </location>
    <ligand>
        <name>Mg(2+)</name>
        <dbReference type="ChEBI" id="CHEBI:18420"/>
        <label>1</label>
        <note>catalytic</note>
    </ligand>
</feature>
<feature type="binding site" evidence="1">
    <location>
        <position position="216"/>
    </location>
    <ligand>
        <name>Mg(2+)</name>
        <dbReference type="ChEBI" id="CHEBI:18420"/>
        <label>1</label>
        <note>catalytic</note>
    </ligand>
</feature>
<feature type="binding site" evidence="1">
    <location>
        <position position="216"/>
    </location>
    <ligand>
        <name>Mg(2+)</name>
        <dbReference type="ChEBI" id="CHEBI:18420"/>
        <label>2</label>
    </ligand>
</feature>
<feature type="binding site" evidence="1">
    <location>
        <position position="218"/>
    </location>
    <ligand>
        <name>Mg(2+)</name>
        <dbReference type="ChEBI" id="CHEBI:18420"/>
        <label>2</label>
    </ligand>
</feature>
<dbReference type="EC" id="2.7.7.101" evidence="1"/>
<dbReference type="EMBL" id="BA000023">
    <property type="protein sequence ID" value="BAB67174.1"/>
    <property type="molecule type" value="Genomic_DNA"/>
</dbReference>
<dbReference type="RefSeq" id="WP_010980150.1">
    <property type="nucleotide sequence ID" value="NC_003106.2"/>
</dbReference>
<dbReference type="SMR" id="Q96YV2"/>
<dbReference type="STRING" id="273063.STK_20750"/>
<dbReference type="GeneID" id="1460140"/>
<dbReference type="KEGG" id="sto:STK_20750"/>
<dbReference type="PATRIC" id="fig|273063.9.peg.2363"/>
<dbReference type="eggNOG" id="arCOG04281">
    <property type="taxonomic scope" value="Archaea"/>
</dbReference>
<dbReference type="OrthoDB" id="8643at2157"/>
<dbReference type="Proteomes" id="UP000001015">
    <property type="component" value="Chromosome"/>
</dbReference>
<dbReference type="GO" id="GO:0005737">
    <property type="term" value="C:cytoplasm"/>
    <property type="evidence" value="ECO:0007669"/>
    <property type="project" value="TreeGrafter"/>
</dbReference>
<dbReference type="GO" id="GO:0000428">
    <property type="term" value="C:DNA-directed RNA polymerase complex"/>
    <property type="evidence" value="ECO:0007669"/>
    <property type="project" value="UniProtKB-KW"/>
</dbReference>
<dbReference type="GO" id="GO:0000178">
    <property type="term" value="C:exosome (RNase complex)"/>
    <property type="evidence" value="ECO:0007669"/>
    <property type="project" value="UniProtKB-KW"/>
</dbReference>
<dbReference type="GO" id="GO:1990077">
    <property type="term" value="C:primosome complex"/>
    <property type="evidence" value="ECO:0007669"/>
    <property type="project" value="UniProtKB-KW"/>
</dbReference>
<dbReference type="GO" id="GO:0003899">
    <property type="term" value="F:DNA-directed RNA polymerase activity"/>
    <property type="evidence" value="ECO:0007669"/>
    <property type="project" value="InterPro"/>
</dbReference>
<dbReference type="GO" id="GO:0046872">
    <property type="term" value="F:metal ion binding"/>
    <property type="evidence" value="ECO:0007669"/>
    <property type="project" value="UniProtKB-KW"/>
</dbReference>
<dbReference type="GO" id="GO:0008143">
    <property type="term" value="F:poly(A) binding"/>
    <property type="evidence" value="ECO:0007669"/>
    <property type="project" value="InterPro"/>
</dbReference>
<dbReference type="GO" id="GO:0006269">
    <property type="term" value="P:DNA replication, synthesis of primer"/>
    <property type="evidence" value="ECO:0007669"/>
    <property type="project" value="UniProtKB-UniRule"/>
</dbReference>
<dbReference type="CDD" id="cd01029">
    <property type="entry name" value="TOPRIM_primases"/>
    <property type="match status" value="1"/>
</dbReference>
<dbReference type="FunFam" id="3.40.1360.10:FF:000010">
    <property type="entry name" value="DNA primase DnaG"/>
    <property type="match status" value="1"/>
</dbReference>
<dbReference type="Gene3D" id="3.40.1360.10">
    <property type="match status" value="1"/>
</dbReference>
<dbReference type="HAMAP" id="MF_00007">
    <property type="entry name" value="DNA_primase_DnaG_arc"/>
    <property type="match status" value="1"/>
</dbReference>
<dbReference type="InterPro" id="IPR050219">
    <property type="entry name" value="DnaG_primase"/>
</dbReference>
<dbReference type="InterPro" id="IPR020607">
    <property type="entry name" value="Primase_DnaG_arc"/>
</dbReference>
<dbReference type="InterPro" id="IPR034154">
    <property type="entry name" value="TOPRIM_DnaG/twinkle"/>
</dbReference>
<dbReference type="InterPro" id="IPR006171">
    <property type="entry name" value="TOPRIM_dom"/>
</dbReference>
<dbReference type="NCBIfam" id="NF003108">
    <property type="entry name" value="PRK04031.1-1"/>
    <property type="match status" value="1"/>
</dbReference>
<dbReference type="PANTHER" id="PTHR30313">
    <property type="entry name" value="DNA PRIMASE"/>
    <property type="match status" value="1"/>
</dbReference>
<dbReference type="PANTHER" id="PTHR30313:SF2">
    <property type="entry name" value="DNA PRIMASE"/>
    <property type="match status" value="1"/>
</dbReference>
<dbReference type="Pfam" id="PF13662">
    <property type="entry name" value="Toprim_4"/>
    <property type="match status" value="1"/>
</dbReference>
<dbReference type="SMART" id="SM00493">
    <property type="entry name" value="TOPRIM"/>
    <property type="match status" value="1"/>
</dbReference>
<dbReference type="SUPFAM" id="SSF110455">
    <property type="entry name" value="Toprim domain"/>
    <property type="match status" value="1"/>
</dbReference>
<dbReference type="PROSITE" id="PS50880">
    <property type="entry name" value="TOPRIM"/>
    <property type="match status" value="1"/>
</dbReference>